<protein>
    <recommendedName>
        <fullName>Anaerobic glycerol-3-phosphate dehydrogenase subunit B</fullName>
        <shortName>Anaerobic G-3-P dehydrogenase subunit B</shortName>
        <shortName>Anaerobic G3Pdhase B</shortName>
        <ecNumber>1.1.5.3</ecNumber>
    </recommendedName>
</protein>
<accession>P43800</accession>
<evidence type="ECO:0000250" key="1"/>
<evidence type="ECO:0000305" key="2"/>
<feature type="chain" id="PRO_0000204563" description="Anaerobic glycerol-3-phosphate dehydrogenase subunit B">
    <location>
        <begin position="1"/>
        <end position="432"/>
    </location>
</feature>
<gene>
    <name type="primary">glpB</name>
    <name type="ordered locus">HI_0684</name>
</gene>
<dbReference type="EC" id="1.1.5.3"/>
<dbReference type="EMBL" id="L42023">
    <property type="protein sequence ID" value="AAC22344.1"/>
    <property type="molecule type" value="Genomic_DNA"/>
</dbReference>
<dbReference type="RefSeq" id="NP_438844.1">
    <property type="nucleotide sequence ID" value="NC_000907.1"/>
</dbReference>
<dbReference type="STRING" id="71421.HI_0684"/>
<dbReference type="DNASU" id="950690"/>
<dbReference type="EnsemblBacteria" id="AAC22344">
    <property type="protein sequence ID" value="AAC22344"/>
    <property type="gene ID" value="HI_0684"/>
</dbReference>
<dbReference type="KEGG" id="hin:HI_0684"/>
<dbReference type="PATRIC" id="fig|71421.8.peg.715"/>
<dbReference type="eggNOG" id="COG3075">
    <property type="taxonomic scope" value="Bacteria"/>
</dbReference>
<dbReference type="HOGENOM" id="CLU_047793_0_0_6"/>
<dbReference type="OrthoDB" id="6395323at2"/>
<dbReference type="PhylomeDB" id="P43800"/>
<dbReference type="BioCyc" id="HINF71421:G1GJ1-719-MONOMER"/>
<dbReference type="UniPathway" id="UPA00618">
    <property type="reaction ID" value="UER00673"/>
</dbReference>
<dbReference type="Proteomes" id="UP000000579">
    <property type="component" value="Chromosome"/>
</dbReference>
<dbReference type="GO" id="GO:0009331">
    <property type="term" value="C:glycerol-3-phosphate dehydrogenase (FAD) complex"/>
    <property type="evidence" value="ECO:0007669"/>
    <property type="project" value="InterPro"/>
</dbReference>
<dbReference type="GO" id="GO:0004368">
    <property type="term" value="F:glycerol-3-phosphate dehydrogenase (quinone) activity"/>
    <property type="evidence" value="ECO:0007669"/>
    <property type="project" value="UniProtKB-UniRule"/>
</dbReference>
<dbReference type="GO" id="GO:0019563">
    <property type="term" value="P:glycerol catabolic process"/>
    <property type="evidence" value="ECO:0007669"/>
    <property type="project" value="UniProtKB-UniRule"/>
</dbReference>
<dbReference type="Gene3D" id="3.50.50.60">
    <property type="entry name" value="FAD/NAD(P)-binding domain"/>
    <property type="match status" value="1"/>
</dbReference>
<dbReference type="HAMAP" id="MF_00753">
    <property type="entry name" value="Glycerol3P_GlpB"/>
    <property type="match status" value="1"/>
</dbReference>
<dbReference type="InterPro" id="IPR003953">
    <property type="entry name" value="FAD-dep_OxRdtase_2_FAD-bd"/>
</dbReference>
<dbReference type="InterPro" id="IPR050315">
    <property type="entry name" value="FAD-oxidoreductase_2"/>
</dbReference>
<dbReference type="InterPro" id="IPR036188">
    <property type="entry name" value="FAD/NAD-bd_sf"/>
</dbReference>
<dbReference type="InterPro" id="IPR009158">
    <property type="entry name" value="G3P_DH_GlpB_su"/>
</dbReference>
<dbReference type="NCBIfam" id="TIGR03378">
    <property type="entry name" value="glycerol3P_GlpB"/>
    <property type="match status" value="1"/>
</dbReference>
<dbReference type="NCBIfam" id="NF003719">
    <property type="entry name" value="PRK05329.1-2"/>
    <property type="match status" value="1"/>
</dbReference>
<dbReference type="NCBIfam" id="NF003720">
    <property type="entry name" value="PRK05329.1-3"/>
    <property type="match status" value="1"/>
</dbReference>
<dbReference type="NCBIfam" id="NF003721">
    <property type="entry name" value="PRK05329.1-4"/>
    <property type="match status" value="1"/>
</dbReference>
<dbReference type="PANTHER" id="PTHR43400:SF11">
    <property type="entry name" value="ANAEROBIC GLYCEROL-3-PHOSPHATE DEHYDROGENASE SUBUNIT B"/>
    <property type="match status" value="1"/>
</dbReference>
<dbReference type="PANTHER" id="PTHR43400">
    <property type="entry name" value="FUMARATE REDUCTASE"/>
    <property type="match status" value="1"/>
</dbReference>
<dbReference type="Pfam" id="PF00890">
    <property type="entry name" value="FAD_binding_2"/>
    <property type="match status" value="1"/>
</dbReference>
<dbReference type="PIRSF" id="PIRSF000141">
    <property type="entry name" value="Anaerobic_G3P_dh"/>
    <property type="match status" value="1"/>
</dbReference>
<dbReference type="SUPFAM" id="SSF51905">
    <property type="entry name" value="FAD/NAD(P)-binding domain"/>
    <property type="match status" value="1"/>
</dbReference>
<comment type="function">
    <text evidence="1">Conversion of glycerol 3-phosphate to dihydroxyacetone. Uses fumarate or nitrate as electron acceptor (By similarity).</text>
</comment>
<comment type="catalytic activity">
    <reaction>
        <text>a quinone + sn-glycerol 3-phosphate = dihydroxyacetone phosphate + a quinol</text>
        <dbReference type="Rhea" id="RHEA:18977"/>
        <dbReference type="ChEBI" id="CHEBI:24646"/>
        <dbReference type="ChEBI" id="CHEBI:57597"/>
        <dbReference type="ChEBI" id="CHEBI:57642"/>
        <dbReference type="ChEBI" id="CHEBI:132124"/>
        <dbReference type="EC" id="1.1.5.3"/>
    </reaction>
</comment>
<comment type="cofactor">
    <cofactor evidence="1">
        <name>FMN</name>
        <dbReference type="ChEBI" id="CHEBI:58210"/>
    </cofactor>
</comment>
<comment type="pathway">
    <text>Polyol metabolism; glycerol degradation via glycerol kinase pathway; glycerone phosphate from sn-glycerol 3-phosphate (anaerobic route): step 1/1.</text>
</comment>
<comment type="subunit">
    <text evidence="1">Composed of a catalytic GlpA/B dimer and of membrane bound GlpC.</text>
</comment>
<comment type="similarity">
    <text evidence="2">Belongs to the anaerobic G-3-P dehydrogenase subunit B family.</text>
</comment>
<proteinExistence type="inferred from homology"/>
<organism>
    <name type="scientific">Haemophilus influenzae (strain ATCC 51907 / DSM 11121 / KW20 / Rd)</name>
    <dbReference type="NCBI Taxonomy" id="71421"/>
    <lineage>
        <taxon>Bacteria</taxon>
        <taxon>Pseudomonadati</taxon>
        <taxon>Pseudomonadota</taxon>
        <taxon>Gammaproteobacteria</taxon>
        <taxon>Pasteurellales</taxon>
        <taxon>Pasteurellaceae</taxon>
        <taxon>Haemophilus</taxon>
    </lineage>
</organism>
<keyword id="KW-0285">Flavoprotein</keyword>
<keyword id="KW-0288">FMN</keyword>
<keyword id="KW-0560">Oxidoreductase</keyword>
<keyword id="KW-1185">Reference proteome</keyword>
<reference key="1">
    <citation type="journal article" date="1995" name="Science">
        <title>Whole-genome random sequencing and assembly of Haemophilus influenzae Rd.</title>
        <authorList>
            <person name="Fleischmann R.D."/>
            <person name="Adams M.D."/>
            <person name="White O."/>
            <person name="Clayton R.A."/>
            <person name="Kirkness E.F."/>
            <person name="Kerlavage A.R."/>
            <person name="Bult C.J."/>
            <person name="Tomb J.-F."/>
            <person name="Dougherty B.A."/>
            <person name="Merrick J.M."/>
            <person name="McKenney K."/>
            <person name="Sutton G.G."/>
            <person name="FitzHugh W."/>
            <person name="Fields C.A."/>
            <person name="Gocayne J.D."/>
            <person name="Scott J.D."/>
            <person name="Shirley R."/>
            <person name="Liu L.-I."/>
            <person name="Glodek A."/>
            <person name="Kelley J.M."/>
            <person name="Weidman J.F."/>
            <person name="Phillips C.A."/>
            <person name="Spriggs T."/>
            <person name="Hedblom E."/>
            <person name="Cotton M.D."/>
            <person name="Utterback T.R."/>
            <person name="Hanna M.C."/>
            <person name="Nguyen D.T."/>
            <person name="Saudek D.M."/>
            <person name="Brandon R.C."/>
            <person name="Fine L.D."/>
            <person name="Fritchman J.L."/>
            <person name="Fuhrmann J.L."/>
            <person name="Geoghagen N.S.M."/>
            <person name="Gnehm C.L."/>
            <person name="McDonald L.A."/>
            <person name="Small K.V."/>
            <person name="Fraser C.M."/>
            <person name="Smith H.O."/>
            <person name="Venter J.C."/>
        </authorList>
    </citation>
    <scope>NUCLEOTIDE SEQUENCE [LARGE SCALE GENOMIC DNA]</scope>
    <source>
        <strain>ATCC 51907 / DSM 11121 / KW20 / Rd</strain>
    </source>
</reference>
<name>GLPB_HAEIN</name>
<sequence>MNFDVAIIGGGLAGLTCAIALQQRGKRCVIINNGQAAIDFASGSLDLLSRMPSTTYGENRAVENLKENITALRNELPAHPYSLLGAEKVLAKAQDFERLANELHLDLIGSTEKNHWRVTGLGSLRGAWLSPNSVPTVQGNEPFPHKRIAVLGIEGYHDFQPQLLAANLVLNPQFEHCEVTSGFLNIPQLDELRKNAREFRSVNISQLLEHKLAFKDLVKEIIESAQGAEAVFLPACFGLENQEFMTALRDATKLALFELPTLPPSLLGMRQRIQLRHKFESLGGLMINGDSALNATFEGNQVRCINTRLLEDEEITADNFVLASGSFFSKGLISEFDKIYEPVFESDIIGVEGFNNKDRFTWTAHRFAHPQPYQSAGVAINAQCQVKKCGQFLTNLYAVGNVIGGFNALELGCGSGVAVVTALAVADEILAK</sequence>